<name>URE3_PSEPG</name>
<organism>
    <name type="scientific">Pseudomonas putida (strain GB-1)</name>
    <dbReference type="NCBI Taxonomy" id="76869"/>
    <lineage>
        <taxon>Bacteria</taxon>
        <taxon>Pseudomonadati</taxon>
        <taxon>Pseudomonadota</taxon>
        <taxon>Gammaproteobacteria</taxon>
        <taxon>Pseudomonadales</taxon>
        <taxon>Pseudomonadaceae</taxon>
        <taxon>Pseudomonas</taxon>
    </lineage>
</organism>
<feature type="chain" id="PRO_1000083427" description="Urease subunit gamma">
    <location>
        <begin position="1"/>
        <end position="100"/>
    </location>
</feature>
<sequence>MELTPREKDKLLLFTAALLAERRLARGLKLNYPEAVALISAAVLEGARDGRTVAELMSLGREVLTREQVMPGIAEMLHDVQVEATFPDGTKLVTVHDPIV</sequence>
<protein>
    <recommendedName>
        <fullName evidence="1">Urease subunit gamma</fullName>
        <ecNumber evidence="1">3.5.1.5</ecNumber>
    </recommendedName>
    <alternativeName>
        <fullName evidence="1">Urea amidohydrolase subunit gamma</fullName>
    </alternativeName>
</protein>
<keyword id="KW-0963">Cytoplasm</keyword>
<keyword id="KW-0378">Hydrolase</keyword>
<accession>B0KUZ9</accession>
<reference key="1">
    <citation type="submission" date="2008-01" db="EMBL/GenBank/DDBJ databases">
        <title>Complete sequence of Pseudomonas putida GB-1.</title>
        <authorList>
            <consortium name="US DOE Joint Genome Institute"/>
            <person name="Copeland A."/>
            <person name="Lucas S."/>
            <person name="Lapidus A."/>
            <person name="Barry K."/>
            <person name="Glavina del Rio T."/>
            <person name="Dalin E."/>
            <person name="Tice H."/>
            <person name="Pitluck S."/>
            <person name="Bruce D."/>
            <person name="Goodwin L."/>
            <person name="Chertkov O."/>
            <person name="Brettin T."/>
            <person name="Detter J.C."/>
            <person name="Han C."/>
            <person name="Kuske C.R."/>
            <person name="Schmutz J."/>
            <person name="Larimer F."/>
            <person name="Land M."/>
            <person name="Hauser L."/>
            <person name="Kyrpides N."/>
            <person name="Kim E."/>
            <person name="McCarthy J.K."/>
            <person name="Richardson P."/>
        </authorList>
    </citation>
    <scope>NUCLEOTIDE SEQUENCE [LARGE SCALE GENOMIC DNA]</scope>
    <source>
        <strain>GB-1</strain>
    </source>
</reference>
<gene>
    <name evidence="1" type="primary">ureA</name>
    <name type="ordered locus">PputGB1_2937</name>
</gene>
<proteinExistence type="inferred from homology"/>
<dbReference type="EC" id="3.5.1.5" evidence="1"/>
<dbReference type="EMBL" id="CP000926">
    <property type="protein sequence ID" value="ABY98831.1"/>
    <property type="molecule type" value="Genomic_DNA"/>
</dbReference>
<dbReference type="RefSeq" id="WP_003253929.1">
    <property type="nucleotide sequence ID" value="NC_010322.1"/>
</dbReference>
<dbReference type="SMR" id="B0KUZ9"/>
<dbReference type="KEGG" id="ppg:PputGB1_2937"/>
<dbReference type="eggNOG" id="COG0831">
    <property type="taxonomic scope" value="Bacteria"/>
</dbReference>
<dbReference type="HOGENOM" id="CLU_145825_1_0_6"/>
<dbReference type="UniPathway" id="UPA00258">
    <property type="reaction ID" value="UER00370"/>
</dbReference>
<dbReference type="Proteomes" id="UP000002157">
    <property type="component" value="Chromosome"/>
</dbReference>
<dbReference type="GO" id="GO:0005737">
    <property type="term" value="C:cytoplasm"/>
    <property type="evidence" value="ECO:0007669"/>
    <property type="project" value="UniProtKB-SubCell"/>
</dbReference>
<dbReference type="GO" id="GO:0016151">
    <property type="term" value="F:nickel cation binding"/>
    <property type="evidence" value="ECO:0007669"/>
    <property type="project" value="InterPro"/>
</dbReference>
<dbReference type="GO" id="GO:0009039">
    <property type="term" value="F:urease activity"/>
    <property type="evidence" value="ECO:0007669"/>
    <property type="project" value="UniProtKB-UniRule"/>
</dbReference>
<dbReference type="GO" id="GO:0043419">
    <property type="term" value="P:urea catabolic process"/>
    <property type="evidence" value="ECO:0007669"/>
    <property type="project" value="UniProtKB-UniRule"/>
</dbReference>
<dbReference type="CDD" id="cd00390">
    <property type="entry name" value="Urease_gamma"/>
    <property type="match status" value="1"/>
</dbReference>
<dbReference type="Gene3D" id="3.30.280.10">
    <property type="entry name" value="Urease, gamma-like subunit"/>
    <property type="match status" value="1"/>
</dbReference>
<dbReference type="HAMAP" id="MF_00739">
    <property type="entry name" value="Urease_gamma"/>
    <property type="match status" value="1"/>
</dbReference>
<dbReference type="InterPro" id="IPR012010">
    <property type="entry name" value="Urease_gamma"/>
</dbReference>
<dbReference type="InterPro" id="IPR002026">
    <property type="entry name" value="Urease_gamma/gamma-beta_su"/>
</dbReference>
<dbReference type="InterPro" id="IPR036463">
    <property type="entry name" value="Urease_gamma_sf"/>
</dbReference>
<dbReference type="InterPro" id="IPR050069">
    <property type="entry name" value="Urease_subunit"/>
</dbReference>
<dbReference type="NCBIfam" id="NF009712">
    <property type="entry name" value="PRK13241.1"/>
    <property type="match status" value="1"/>
</dbReference>
<dbReference type="NCBIfam" id="TIGR00193">
    <property type="entry name" value="urease_gam"/>
    <property type="match status" value="1"/>
</dbReference>
<dbReference type="PANTHER" id="PTHR33569">
    <property type="entry name" value="UREASE"/>
    <property type="match status" value="1"/>
</dbReference>
<dbReference type="PANTHER" id="PTHR33569:SF1">
    <property type="entry name" value="UREASE"/>
    <property type="match status" value="1"/>
</dbReference>
<dbReference type="Pfam" id="PF00547">
    <property type="entry name" value="Urease_gamma"/>
    <property type="match status" value="1"/>
</dbReference>
<dbReference type="PIRSF" id="PIRSF001223">
    <property type="entry name" value="Urease_gamma"/>
    <property type="match status" value="1"/>
</dbReference>
<dbReference type="SUPFAM" id="SSF54111">
    <property type="entry name" value="Urease, gamma-subunit"/>
    <property type="match status" value="1"/>
</dbReference>
<evidence type="ECO:0000255" key="1">
    <source>
        <dbReference type="HAMAP-Rule" id="MF_00739"/>
    </source>
</evidence>
<comment type="catalytic activity">
    <reaction evidence="1">
        <text>urea + 2 H2O + H(+) = hydrogencarbonate + 2 NH4(+)</text>
        <dbReference type="Rhea" id="RHEA:20557"/>
        <dbReference type="ChEBI" id="CHEBI:15377"/>
        <dbReference type="ChEBI" id="CHEBI:15378"/>
        <dbReference type="ChEBI" id="CHEBI:16199"/>
        <dbReference type="ChEBI" id="CHEBI:17544"/>
        <dbReference type="ChEBI" id="CHEBI:28938"/>
        <dbReference type="EC" id="3.5.1.5"/>
    </reaction>
</comment>
<comment type="pathway">
    <text evidence="1">Nitrogen metabolism; urea degradation; CO(2) and NH(3) from urea (urease route): step 1/1.</text>
</comment>
<comment type="subunit">
    <text evidence="1">Heterotrimer of UreA (gamma), UreB (beta) and UreC (alpha) subunits. Three heterotrimers associate to form the active enzyme.</text>
</comment>
<comment type="subcellular location">
    <subcellularLocation>
        <location evidence="1">Cytoplasm</location>
    </subcellularLocation>
</comment>
<comment type="similarity">
    <text evidence="1">Belongs to the urease gamma subunit family.</text>
</comment>